<organism>
    <name type="scientific">Salmonella schwarzengrund (strain CVM19633)</name>
    <dbReference type="NCBI Taxonomy" id="439843"/>
    <lineage>
        <taxon>Bacteria</taxon>
        <taxon>Pseudomonadati</taxon>
        <taxon>Pseudomonadota</taxon>
        <taxon>Gammaproteobacteria</taxon>
        <taxon>Enterobacterales</taxon>
        <taxon>Enterobacteriaceae</taxon>
        <taxon>Salmonella</taxon>
    </lineage>
</organism>
<sequence>MRTSQYLLSTLKETPADAEVISHQLMLRAGMIRKLASGLYTWLPTGLRVLKKVENIVREEMNNAGAIEVSMPVVQPADLWQESGRWEQYGPELLRFVDRGERPFVLGPTHEEVITDLVRNELSSYKQLPLNFFQIQTKFRDEVRPRFGVMRSREFLMKDAYSFHTSQESLQETYDAMYAAYSRIFSRMGLDFRAVQADTGSIGGNASHEFQVLAQSGEDDIVFSDVSDYAANIELAEAIAPQTPRAAATQEMTLVDTPNAKTIAELVEQFNLPIEKTVKTLLVKAAKDSKSPLVALLVRGDHELNEVKAEKLPHVASPLTFATEEEIRAVINAGPGSLGPVNMSIPVIIDRTVAAMSDFAAGANIDGKHYFGINWDRDVATPVVADIRNVVAGDPSPDGQGTLLIKRGIEVGHIFQLGTKYSEALKASVQGEDGRNQILTMGCYGIGVTRVVAAAIEQNFDERGIVWPDAIAPFQVAILPMNMHKSFRVQELAEKLYSELRAQGIEVLMDDRKERPGVMFADMELIGIPHTIVIGDRNLDNDDIEYKYRRSGEKSLIKTGDIVDYLVKAIKG</sequence>
<gene>
    <name evidence="1" type="primary">proS</name>
    <name type="ordered locus">SeSA_A0269</name>
</gene>
<evidence type="ECO:0000255" key="1">
    <source>
        <dbReference type="HAMAP-Rule" id="MF_01569"/>
    </source>
</evidence>
<dbReference type="EC" id="6.1.1.15" evidence="1"/>
<dbReference type="EMBL" id="CP001127">
    <property type="protein sequence ID" value="ACF90664.1"/>
    <property type="molecule type" value="Genomic_DNA"/>
</dbReference>
<dbReference type="RefSeq" id="WP_001260675.1">
    <property type="nucleotide sequence ID" value="NC_011094.1"/>
</dbReference>
<dbReference type="SMR" id="B4TYF5"/>
<dbReference type="KEGG" id="sew:SeSA_A0269"/>
<dbReference type="HOGENOM" id="CLU_016739_0_0_6"/>
<dbReference type="Proteomes" id="UP000001865">
    <property type="component" value="Chromosome"/>
</dbReference>
<dbReference type="GO" id="GO:0005829">
    <property type="term" value="C:cytosol"/>
    <property type="evidence" value="ECO:0007669"/>
    <property type="project" value="TreeGrafter"/>
</dbReference>
<dbReference type="GO" id="GO:0002161">
    <property type="term" value="F:aminoacyl-tRNA deacylase activity"/>
    <property type="evidence" value="ECO:0007669"/>
    <property type="project" value="InterPro"/>
</dbReference>
<dbReference type="GO" id="GO:0005524">
    <property type="term" value="F:ATP binding"/>
    <property type="evidence" value="ECO:0007669"/>
    <property type="project" value="UniProtKB-UniRule"/>
</dbReference>
<dbReference type="GO" id="GO:0004827">
    <property type="term" value="F:proline-tRNA ligase activity"/>
    <property type="evidence" value="ECO:0007669"/>
    <property type="project" value="UniProtKB-UniRule"/>
</dbReference>
<dbReference type="GO" id="GO:0006433">
    <property type="term" value="P:prolyl-tRNA aminoacylation"/>
    <property type="evidence" value="ECO:0007669"/>
    <property type="project" value="UniProtKB-UniRule"/>
</dbReference>
<dbReference type="CDD" id="cd04334">
    <property type="entry name" value="ProRS-INS"/>
    <property type="match status" value="1"/>
</dbReference>
<dbReference type="CDD" id="cd00861">
    <property type="entry name" value="ProRS_anticodon_short"/>
    <property type="match status" value="1"/>
</dbReference>
<dbReference type="CDD" id="cd00779">
    <property type="entry name" value="ProRS_core_prok"/>
    <property type="match status" value="1"/>
</dbReference>
<dbReference type="FunFam" id="3.30.930.10:FF:000012">
    <property type="entry name" value="Proline--tRNA ligase"/>
    <property type="match status" value="1"/>
</dbReference>
<dbReference type="FunFam" id="3.30.930.10:FF:000097">
    <property type="entry name" value="Proline--tRNA ligase"/>
    <property type="match status" value="1"/>
</dbReference>
<dbReference type="FunFam" id="3.40.50.800:FF:000006">
    <property type="entry name" value="Proline--tRNA ligase"/>
    <property type="match status" value="1"/>
</dbReference>
<dbReference type="FunFam" id="3.90.960.10:FF:000001">
    <property type="entry name" value="Proline--tRNA ligase"/>
    <property type="match status" value="1"/>
</dbReference>
<dbReference type="Gene3D" id="3.40.50.800">
    <property type="entry name" value="Anticodon-binding domain"/>
    <property type="match status" value="1"/>
</dbReference>
<dbReference type="Gene3D" id="3.30.930.10">
    <property type="entry name" value="Bira Bifunctional Protein, Domain 2"/>
    <property type="match status" value="2"/>
</dbReference>
<dbReference type="Gene3D" id="3.90.960.10">
    <property type="entry name" value="YbaK/aminoacyl-tRNA synthetase-associated domain"/>
    <property type="match status" value="1"/>
</dbReference>
<dbReference type="HAMAP" id="MF_01569">
    <property type="entry name" value="Pro_tRNA_synth_type1"/>
    <property type="match status" value="1"/>
</dbReference>
<dbReference type="InterPro" id="IPR002314">
    <property type="entry name" value="aa-tRNA-synt_IIb"/>
</dbReference>
<dbReference type="InterPro" id="IPR006195">
    <property type="entry name" value="aa-tRNA-synth_II"/>
</dbReference>
<dbReference type="InterPro" id="IPR045864">
    <property type="entry name" value="aa-tRNA-synth_II/BPL/LPL"/>
</dbReference>
<dbReference type="InterPro" id="IPR004154">
    <property type="entry name" value="Anticodon-bd"/>
</dbReference>
<dbReference type="InterPro" id="IPR036621">
    <property type="entry name" value="Anticodon-bd_dom_sf"/>
</dbReference>
<dbReference type="InterPro" id="IPR002316">
    <property type="entry name" value="Pro-tRNA-ligase_IIa"/>
</dbReference>
<dbReference type="InterPro" id="IPR004500">
    <property type="entry name" value="Pro-tRNA-synth_IIa_bac-type"/>
</dbReference>
<dbReference type="InterPro" id="IPR023717">
    <property type="entry name" value="Pro-tRNA-Synthase_IIa_type1"/>
</dbReference>
<dbReference type="InterPro" id="IPR050062">
    <property type="entry name" value="Pro-tRNA_synthetase"/>
</dbReference>
<dbReference type="InterPro" id="IPR044140">
    <property type="entry name" value="ProRS_anticodon_short"/>
</dbReference>
<dbReference type="InterPro" id="IPR033730">
    <property type="entry name" value="ProRS_core_prok"/>
</dbReference>
<dbReference type="InterPro" id="IPR036754">
    <property type="entry name" value="YbaK/aa-tRNA-synt-asso_dom_sf"/>
</dbReference>
<dbReference type="InterPro" id="IPR007214">
    <property type="entry name" value="YbaK/aa-tRNA-synth-assoc-dom"/>
</dbReference>
<dbReference type="NCBIfam" id="NF006625">
    <property type="entry name" value="PRK09194.1"/>
    <property type="match status" value="1"/>
</dbReference>
<dbReference type="NCBIfam" id="TIGR00409">
    <property type="entry name" value="proS_fam_II"/>
    <property type="match status" value="1"/>
</dbReference>
<dbReference type="PANTHER" id="PTHR42753">
    <property type="entry name" value="MITOCHONDRIAL RIBOSOME PROTEIN L39/PROLYL-TRNA LIGASE FAMILY MEMBER"/>
    <property type="match status" value="1"/>
</dbReference>
<dbReference type="PANTHER" id="PTHR42753:SF2">
    <property type="entry name" value="PROLINE--TRNA LIGASE"/>
    <property type="match status" value="1"/>
</dbReference>
<dbReference type="Pfam" id="PF03129">
    <property type="entry name" value="HGTP_anticodon"/>
    <property type="match status" value="1"/>
</dbReference>
<dbReference type="Pfam" id="PF00587">
    <property type="entry name" value="tRNA-synt_2b"/>
    <property type="match status" value="1"/>
</dbReference>
<dbReference type="Pfam" id="PF04073">
    <property type="entry name" value="tRNA_edit"/>
    <property type="match status" value="1"/>
</dbReference>
<dbReference type="PIRSF" id="PIRSF001535">
    <property type="entry name" value="ProRS_1"/>
    <property type="match status" value="1"/>
</dbReference>
<dbReference type="PRINTS" id="PR01046">
    <property type="entry name" value="TRNASYNTHPRO"/>
</dbReference>
<dbReference type="SUPFAM" id="SSF52954">
    <property type="entry name" value="Class II aaRS ABD-related"/>
    <property type="match status" value="1"/>
</dbReference>
<dbReference type="SUPFAM" id="SSF55681">
    <property type="entry name" value="Class II aaRS and biotin synthetases"/>
    <property type="match status" value="1"/>
</dbReference>
<dbReference type="SUPFAM" id="SSF55826">
    <property type="entry name" value="YbaK/ProRS associated domain"/>
    <property type="match status" value="1"/>
</dbReference>
<dbReference type="PROSITE" id="PS50862">
    <property type="entry name" value="AA_TRNA_LIGASE_II"/>
    <property type="match status" value="1"/>
</dbReference>
<reference key="1">
    <citation type="journal article" date="2011" name="J. Bacteriol.">
        <title>Comparative genomics of 28 Salmonella enterica isolates: evidence for CRISPR-mediated adaptive sublineage evolution.</title>
        <authorList>
            <person name="Fricke W.F."/>
            <person name="Mammel M.K."/>
            <person name="McDermott P.F."/>
            <person name="Tartera C."/>
            <person name="White D.G."/>
            <person name="Leclerc J.E."/>
            <person name="Ravel J."/>
            <person name="Cebula T.A."/>
        </authorList>
    </citation>
    <scope>NUCLEOTIDE SEQUENCE [LARGE SCALE GENOMIC DNA]</scope>
    <source>
        <strain>CVM19633</strain>
    </source>
</reference>
<comment type="function">
    <text evidence="1">Catalyzes the attachment of proline to tRNA(Pro) in a two-step reaction: proline is first activated by ATP to form Pro-AMP and then transferred to the acceptor end of tRNA(Pro). As ProRS can inadvertently accommodate and process non-cognate amino acids such as alanine and cysteine, to avoid such errors it has two additional distinct editing activities against alanine. One activity is designated as 'pretransfer' editing and involves the tRNA(Pro)-independent hydrolysis of activated Ala-AMP. The other activity is designated 'posttransfer' editing and involves deacylation of mischarged Ala-tRNA(Pro). The misacylated Cys-tRNA(Pro) is not edited by ProRS.</text>
</comment>
<comment type="catalytic activity">
    <reaction evidence="1">
        <text>tRNA(Pro) + L-proline + ATP = L-prolyl-tRNA(Pro) + AMP + diphosphate</text>
        <dbReference type="Rhea" id="RHEA:14305"/>
        <dbReference type="Rhea" id="RHEA-COMP:9700"/>
        <dbReference type="Rhea" id="RHEA-COMP:9702"/>
        <dbReference type="ChEBI" id="CHEBI:30616"/>
        <dbReference type="ChEBI" id="CHEBI:33019"/>
        <dbReference type="ChEBI" id="CHEBI:60039"/>
        <dbReference type="ChEBI" id="CHEBI:78442"/>
        <dbReference type="ChEBI" id="CHEBI:78532"/>
        <dbReference type="ChEBI" id="CHEBI:456215"/>
        <dbReference type="EC" id="6.1.1.15"/>
    </reaction>
</comment>
<comment type="subunit">
    <text evidence="1">Homodimer.</text>
</comment>
<comment type="subcellular location">
    <subcellularLocation>
        <location evidence="1">Cytoplasm</location>
    </subcellularLocation>
</comment>
<comment type="domain">
    <text evidence="1">Consists of three domains: the N-terminal catalytic domain, the editing domain and the C-terminal anticodon-binding domain.</text>
</comment>
<comment type="similarity">
    <text evidence="1">Belongs to the class-II aminoacyl-tRNA synthetase family. ProS type 1 subfamily.</text>
</comment>
<name>SYP_SALSV</name>
<keyword id="KW-0030">Aminoacyl-tRNA synthetase</keyword>
<keyword id="KW-0067">ATP-binding</keyword>
<keyword id="KW-0963">Cytoplasm</keyword>
<keyword id="KW-0436">Ligase</keyword>
<keyword id="KW-0547">Nucleotide-binding</keyword>
<keyword id="KW-0648">Protein biosynthesis</keyword>
<feature type="chain" id="PRO_1000199421" description="Proline--tRNA ligase">
    <location>
        <begin position="1"/>
        <end position="572"/>
    </location>
</feature>
<proteinExistence type="inferred from homology"/>
<accession>B4TYF5</accession>
<protein>
    <recommendedName>
        <fullName evidence="1">Proline--tRNA ligase</fullName>
        <ecNumber evidence="1">6.1.1.15</ecNumber>
    </recommendedName>
    <alternativeName>
        <fullName evidence="1">Prolyl-tRNA synthetase</fullName>
        <shortName evidence="1">ProRS</shortName>
    </alternativeName>
</protein>